<accession>Q9H4I0</accession>
<accession>B2RXL0</accession>
<accession>B7ZBB1</accession>
<accession>B7ZW76</accession>
<accession>Q5W0X5</accession>
<proteinExistence type="evidence at protein level"/>
<keyword id="KW-0025">Alternative splicing</keyword>
<keyword id="KW-0158">Chromosome</keyword>
<keyword id="KW-0159">Chromosome partition</keyword>
<keyword id="KW-0469">Meiosis</keyword>
<keyword id="KW-0539">Nucleus</keyword>
<keyword id="KW-1267">Proteomics identification</keyword>
<keyword id="KW-1185">Reference proteome</keyword>
<dbReference type="EMBL" id="AL031665">
    <property type="status" value="NOT_ANNOTATED_CDS"/>
    <property type="molecule type" value="Genomic_DNA"/>
</dbReference>
<dbReference type="EMBL" id="AL136531">
    <property type="status" value="NOT_ANNOTATED_CDS"/>
    <property type="molecule type" value="Genomic_DNA"/>
</dbReference>
<dbReference type="EMBL" id="BC157891">
    <property type="protein sequence ID" value="AAI57892.1"/>
    <property type="molecule type" value="mRNA"/>
</dbReference>
<dbReference type="EMBL" id="BC171911">
    <property type="protein sequence ID" value="AAI71911.1"/>
    <property type="molecule type" value="mRNA"/>
</dbReference>
<dbReference type="CCDS" id="CCDS46568.1">
    <molecule id="Q9H4I0-1"/>
</dbReference>
<dbReference type="RefSeq" id="NP_001130038.2">
    <molecule id="Q9H4I0-1"/>
    <property type="nucleotide sequence ID" value="NM_001136566.3"/>
</dbReference>
<dbReference type="RefSeq" id="XP_006723668.1">
    <molecule id="Q9H4I0-1"/>
    <property type="nucleotide sequence ID" value="XM_006723605.4"/>
</dbReference>
<dbReference type="BioGRID" id="568137">
    <property type="interactions" value="2"/>
</dbReference>
<dbReference type="ComplexPortal" id="CPX-7441">
    <property type="entry name" value="Nuclear meiotic cohesin complex, RAD21L1 variant"/>
</dbReference>
<dbReference type="FunCoup" id="Q9H4I0">
    <property type="interactions" value="358"/>
</dbReference>
<dbReference type="STRING" id="9606.ENSP00000386414"/>
<dbReference type="iPTMnet" id="Q9H4I0"/>
<dbReference type="PhosphoSitePlus" id="Q9H4I0"/>
<dbReference type="BioMuta" id="RAD21L1"/>
<dbReference type="DMDM" id="259016327"/>
<dbReference type="jPOST" id="Q9H4I0"/>
<dbReference type="MassIVE" id="Q9H4I0"/>
<dbReference type="PaxDb" id="9606-ENSP00000386414"/>
<dbReference type="PeptideAtlas" id="Q9H4I0"/>
<dbReference type="ProteomicsDB" id="80840">
    <molecule id="Q9H4I0-1"/>
</dbReference>
<dbReference type="ProteomicsDB" id="80841">
    <molecule id="Q9H4I0-2"/>
</dbReference>
<dbReference type="Antibodypedia" id="62726">
    <property type="antibodies" value="5 antibodies from 5 providers"/>
</dbReference>
<dbReference type="DNASU" id="642636"/>
<dbReference type="Ensembl" id="ENST00000402452.5">
    <molecule id="Q9H4I0-2"/>
    <property type="protein sequence ID" value="ENSP00000385925.1"/>
    <property type="gene ID" value="ENSG00000244588.6"/>
</dbReference>
<dbReference type="Ensembl" id="ENST00000409241.5">
    <molecule id="Q9H4I0-1"/>
    <property type="protein sequence ID" value="ENSP00000386414.1"/>
    <property type="gene ID" value="ENSG00000244588.6"/>
</dbReference>
<dbReference type="GeneID" id="642636"/>
<dbReference type="KEGG" id="hsa:642636"/>
<dbReference type="UCSC" id="uc010gab.1">
    <molecule id="Q9H4I0-1"/>
    <property type="organism name" value="human"/>
</dbReference>
<dbReference type="AGR" id="HGNC:16271"/>
<dbReference type="CTD" id="642636"/>
<dbReference type="DisGeNET" id="642636"/>
<dbReference type="GeneCards" id="RAD21L1"/>
<dbReference type="HGNC" id="HGNC:16271">
    <property type="gene designation" value="RAD21L1"/>
</dbReference>
<dbReference type="HPA" id="ENSG00000244588">
    <property type="expression patterns" value="Tissue enriched (testis)"/>
</dbReference>
<dbReference type="MIM" id="619533">
    <property type="type" value="gene"/>
</dbReference>
<dbReference type="neXtProt" id="NX_Q9H4I0"/>
<dbReference type="OpenTargets" id="ENSG00000244588"/>
<dbReference type="PharmGKB" id="PA34171"/>
<dbReference type="VEuPathDB" id="HostDB:ENSG00000244588"/>
<dbReference type="eggNOG" id="KOG1213">
    <property type="taxonomic scope" value="Eukaryota"/>
</dbReference>
<dbReference type="GeneTree" id="ENSGT00940000161638"/>
<dbReference type="HOGENOM" id="CLU_015775_1_1_1"/>
<dbReference type="InParanoid" id="Q9H4I0"/>
<dbReference type="OMA" id="SVMKEPN"/>
<dbReference type="OrthoDB" id="10071381at2759"/>
<dbReference type="PAN-GO" id="Q9H4I0">
    <property type="GO annotations" value="4 GO annotations based on evolutionary models"/>
</dbReference>
<dbReference type="PhylomeDB" id="Q9H4I0"/>
<dbReference type="TreeFam" id="TF101215"/>
<dbReference type="PathwayCommons" id="Q9H4I0"/>
<dbReference type="SIGNOR" id="Q9H4I0"/>
<dbReference type="BioGRID-ORCS" id="642636">
    <property type="hits" value="10 hits in 1142 CRISPR screens"/>
</dbReference>
<dbReference type="CD-CODE" id="91857CE7">
    <property type="entry name" value="Nucleolus"/>
</dbReference>
<dbReference type="ChiTaRS" id="RAD21L1">
    <property type="organism name" value="human"/>
</dbReference>
<dbReference type="GenomeRNAi" id="642636"/>
<dbReference type="Pharos" id="Q9H4I0">
    <property type="development level" value="Tdark"/>
</dbReference>
<dbReference type="PRO" id="PR:Q9H4I0"/>
<dbReference type="Proteomes" id="UP000005640">
    <property type="component" value="Chromosome 20"/>
</dbReference>
<dbReference type="RNAct" id="Q9H4I0">
    <property type="molecule type" value="protein"/>
</dbReference>
<dbReference type="Bgee" id="ENSG00000244588">
    <property type="expression patterns" value="Expressed in sperm and 30 other cell types or tissues"/>
</dbReference>
<dbReference type="ExpressionAtlas" id="Q9H4I0">
    <property type="expression patterns" value="baseline and differential"/>
</dbReference>
<dbReference type="GO" id="GO:0005694">
    <property type="term" value="C:chromosome"/>
    <property type="evidence" value="ECO:0000250"/>
    <property type="project" value="UniProtKB"/>
</dbReference>
<dbReference type="GO" id="GO:0030893">
    <property type="term" value="C:meiotic cohesin complex"/>
    <property type="evidence" value="ECO:0000250"/>
    <property type="project" value="UniProtKB"/>
</dbReference>
<dbReference type="GO" id="GO:0005634">
    <property type="term" value="C:nucleus"/>
    <property type="evidence" value="ECO:0000250"/>
    <property type="project" value="UniProtKB"/>
</dbReference>
<dbReference type="GO" id="GO:0003682">
    <property type="term" value="F:chromatin binding"/>
    <property type="evidence" value="ECO:0000318"/>
    <property type="project" value="GO_Central"/>
</dbReference>
<dbReference type="GO" id="GO:0007059">
    <property type="term" value="P:chromosome segregation"/>
    <property type="evidence" value="ECO:0007669"/>
    <property type="project" value="UniProtKB-KW"/>
</dbReference>
<dbReference type="GO" id="GO:0051321">
    <property type="term" value="P:meiotic cell cycle"/>
    <property type="evidence" value="ECO:0007669"/>
    <property type="project" value="UniProtKB-KW"/>
</dbReference>
<dbReference type="GO" id="GO:1990414">
    <property type="term" value="P:replication-born double-strand break repair via sister chromatid exchange"/>
    <property type="evidence" value="ECO:0000318"/>
    <property type="project" value="GO_Central"/>
</dbReference>
<dbReference type="GO" id="GO:0007062">
    <property type="term" value="P:sister chromatid cohesion"/>
    <property type="evidence" value="ECO:0000318"/>
    <property type="project" value="GO_Central"/>
</dbReference>
<dbReference type="CDD" id="cd21792">
    <property type="entry name" value="Rad21_Rec8_M_NXP1-like"/>
    <property type="match status" value="1"/>
</dbReference>
<dbReference type="FunFam" id="1.10.10.580:FF:000001">
    <property type="entry name" value="double-strand-break repair protein rad21 homolog"/>
    <property type="match status" value="1"/>
</dbReference>
<dbReference type="Gene3D" id="1.10.10.580">
    <property type="entry name" value="Structural maintenance of chromosome 1. Chain E"/>
    <property type="match status" value="1"/>
</dbReference>
<dbReference type="InterPro" id="IPR049589">
    <property type="entry name" value="NXP1_M-like"/>
</dbReference>
<dbReference type="InterPro" id="IPR039781">
    <property type="entry name" value="Rad21/Rec8-like"/>
</dbReference>
<dbReference type="InterPro" id="IPR006909">
    <property type="entry name" value="Rad21/Rec8_C_eu"/>
</dbReference>
<dbReference type="InterPro" id="IPR006910">
    <property type="entry name" value="Rad21_Rec8_N"/>
</dbReference>
<dbReference type="InterPro" id="IPR023093">
    <property type="entry name" value="ScpA-like_C"/>
</dbReference>
<dbReference type="InterPro" id="IPR036390">
    <property type="entry name" value="WH_DNA-bd_sf"/>
</dbReference>
<dbReference type="PANTHER" id="PTHR12585:SF19">
    <property type="entry name" value="DOUBLE-STRAND-BREAK REPAIR PROTEIN RAD21-LIKE PROTEIN 1"/>
    <property type="match status" value="1"/>
</dbReference>
<dbReference type="PANTHER" id="PTHR12585">
    <property type="entry name" value="SCC1 / RAD21 FAMILY MEMBER"/>
    <property type="match status" value="1"/>
</dbReference>
<dbReference type="Pfam" id="PF04824">
    <property type="entry name" value="Rad21_Rec8"/>
    <property type="match status" value="1"/>
</dbReference>
<dbReference type="Pfam" id="PF04825">
    <property type="entry name" value="Rad21_Rec8_N"/>
    <property type="match status" value="1"/>
</dbReference>
<dbReference type="SUPFAM" id="SSF46785">
    <property type="entry name" value="Winged helix' DNA-binding domain"/>
    <property type="match status" value="1"/>
</dbReference>
<feature type="chain" id="PRO_0000321921" description="Double-strand-break repair protein rad21-like protein 1">
    <location>
        <begin position="1"/>
        <end position="556"/>
    </location>
</feature>
<feature type="splice variant" id="VSP_038157" description="In isoform 2." evidence="5">
    <location>
        <begin position="437"/>
        <end position="468"/>
    </location>
</feature>
<feature type="splice variant" id="VSP_038158" description="In isoform 2." evidence="5">
    <original>ESNKMGMQSFSLMKLCRNSDRKQAAAKFYSFLVLKKQLAIELSQSAPYADIIATMGPMFYNI</original>
    <variation>VADQGQAAAAATAEALRQAGPEWCEPAGLRRASGLSPRDTAHPTPYSDPQPHGHVPARK</variation>
    <location>
        <begin position="495"/>
        <end position="556"/>
    </location>
</feature>
<feature type="sequence variant" id="VAR_064917" description="In dbSNP:rs450739." evidence="3">
    <original>C</original>
    <variation>R</variation>
    <location>
        <position position="90"/>
    </location>
</feature>
<feature type="sequence variant" id="VAR_064918" description="In dbSNP:rs203534." evidence="3">
    <original>I</original>
    <variation>L</variation>
    <location>
        <position position="152"/>
    </location>
</feature>
<feature type="sequence variant" id="VAR_064919" description="In dbSNP:rs17717241.">
    <original>H</original>
    <variation>P</variation>
    <location>
        <position position="423"/>
    </location>
</feature>
<feature type="sequence variant" id="VAR_087424" description="Found in a patient with non-obstructive azoospermia; uncertain significance." evidence="4">
    <location>
        <begin position="515"/>
        <end position="556"/>
    </location>
</feature>
<feature type="sequence conflict" description="In Ref. 2; AAI71911." evidence="5" ref="2">
    <original>F</original>
    <variation>L</variation>
    <location>
        <position position="525"/>
    </location>
</feature>
<reference key="1">
    <citation type="journal article" date="2001" name="Nature">
        <title>The DNA sequence and comparative analysis of human chromosome 20.</title>
        <authorList>
            <person name="Deloukas P."/>
            <person name="Matthews L.H."/>
            <person name="Ashurst J.L."/>
            <person name="Burton J."/>
            <person name="Gilbert J.G.R."/>
            <person name="Jones M."/>
            <person name="Stavrides G."/>
            <person name="Almeida J.P."/>
            <person name="Babbage A.K."/>
            <person name="Bagguley C.L."/>
            <person name="Bailey J."/>
            <person name="Barlow K.F."/>
            <person name="Bates K.N."/>
            <person name="Beard L.M."/>
            <person name="Beare D.M."/>
            <person name="Beasley O.P."/>
            <person name="Bird C.P."/>
            <person name="Blakey S.E."/>
            <person name="Bridgeman A.M."/>
            <person name="Brown A.J."/>
            <person name="Buck D."/>
            <person name="Burrill W.D."/>
            <person name="Butler A.P."/>
            <person name="Carder C."/>
            <person name="Carter N.P."/>
            <person name="Chapman J.C."/>
            <person name="Clamp M."/>
            <person name="Clark G."/>
            <person name="Clark L.N."/>
            <person name="Clark S.Y."/>
            <person name="Clee C.M."/>
            <person name="Clegg S."/>
            <person name="Cobley V.E."/>
            <person name="Collier R.E."/>
            <person name="Connor R.E."/>
            <person name="Corby N.R."/>
            <person name="Coulson A."/>
            <person name="Coville G.J."/>
            <person name="Deadman R."/>
            <person name="Dhami P.D."/>
            <person name="Dunn M."/>
            <person name="Ellington A.G."/>
            <person name="Frankland J.A."/>
            <person name="Fraser A."/>
            <person name="French L."/>
            <person name="Garner P."/>
            <person name="Grafham D.V."/>
            <person name="Griffiths C."/>
            <person name="Griffiths M.N.D."/>
            <person name="Gwilliam R."/>
            <person name="Hall R.E."/>
            <person name="Hammond S."/>
            <person name="Harley J.L."/>
            <person name="Heath P.D."/>
            <person name="Ho S."/>
            <person name="Holden J.L."/>
            <person name="Howden P.J."/>
            <person name="Huckle E."/>
            <person name="Hunt A.R."/>
            <person name="Hunt S.E."/>
            <person name="Jekosch K."/>
            <person name="Johnson C.M."/>
            <person name="Johnson D."/>
            <person name="Kay M.P."/>
            <person name="Kimberley A.M."/>
            <person name="King A."/>
            <person name="Knights A."/>
            <person name="Laird G.K."/>
            <person name="Lawlor S."/>
            <person name="Lehvaeslaiho M.H."/>
            <person name="Leversha M.A."/>
            <person name="Lloyd C."/>
            <person name="Lloyd D.M."/>
            <person name="Lovell J.D."/>
            <person name="Marsh V.L."/>
            <person name="Martin S.L."/>
            <person name="McConnachie L.J."/>
            <person name="McLay K."/>
            <person name="McMurray A.A."/>
            <person name="Milne S.A."/>
            <person name="Mistry D."/>
            <person name="Moore M.J.F."/>
            <person name="Mullikin J.C."/>
            <person name="Nickerson T."/>
            <person name="Oliver K."/>
            <person name="Parker A."/>
            <person name="Patel R."/>
            <person name="Pearce T.A.V."/>
            <person name="Peck A.I."/>
            <person name="Phillimore B.J.C.T."/>
            <person name="Prathalingam S.R."/>
            <person name="Plumb R.W."/>
            <person name="Ramsay H."/>
            <person name="Rice C.M."/>
            <person name="Ross M.T."/>
            <person name="Scott C.E."/>
            <person name="Sehra H.K."/>
            <person name="Shownkeen R."/>
            <person name="Sims S."/>
            <person name="Skuce C.D."/>
            <person name="Smith M.L."/>
            <person name="Soderlund C."/>
            <person name="Steward C.A."/>
            <person name="Sulston J.E."/>
            <person name="Swann R.M."/>
            <person name="Sycamore N."/>
            <person name="Taylor R."/>
            <person name="Tee L."/>
            <person name="Thomas D.W."/>
            <person name="Thorpe A."/>
            <person name="Tracey A."/>
            <person name="Tromans A.C."/>
            <person name="Vaudin M."/>
            <person name="Wall M."/>
            <person name="Wallis J.M."/>
            <person name="Whitehead S.L."/>
            <person name="Whittaker P."/>
            <person name="Willey D.L."/>
            <person name="Williams L."/>
            <person name="Williams S.A."/>
            <person name="Wilming L."/>
            <person name="Wray P.W."/>
            <person name="Hubbard T."/>
            <person name="Durbin R.M."/>
            <person name="Bentley D.R."/>
            <person name="Beck S."/>
            <person name="Rogers J."/>
        </authorList>
    </citation>
    <scope>NUCLEOTIDE SEQUENCE [LARGE SCALE GENOMIC DNA]</scope>
</reference>
<reference key="2">
    <citation type="journal article" date="2004" name="Genome Res.">
        <title>The status, quality, and expansion of the NIH full-length cDNA project: the Mammalian Gene Collection (MGC).</title>
        <authorList>
            <consortium name="The MGC Project Team"/>
        </authorList>
    </citation>
    <scope>NUCLEOTIDE SEQUENCE [LARGE SCALE MRNA] (ISOFORM 1)</scope>
    <scope>VARIANTS ARG-90 AND LEU-152</scope>
</reference>
<reference key="3">
    <citation type="journal article" date="2020" name="Genet. Med.">
        <title>Genetic dissection of spermatogenic arrest through exome analysis: clinical implications for the management of azoospermic men.</title>
        <authorList>
            <person name="Krausz C."/>
            <person name="Riera-Escamilla A."/>
            <person name="Moreno-Mendoza D."/>
            <person name="Holleman K."/>
            <person name="Cioppi F."/>
            <person name="Algaba F."/>
            <person name="Pybus M."/>
            <person name="Friedrich C."/>
            <person name="Wyrwoll M.J."/>
            <person name="Casamonti E."/>
            <person name="Pietroforte S."/>
            <person name="Nagirnaja L."/>
            <person name="Lopes A.M."/>
            <person name="Kliesch S."/>
            <person name="Pilatz A."/>
            <person name="Carrell D.T."/>
            <person name="Conrad D.F."/>
            <person name="Ars E."/>
            <person name="Ruiz-Castane E."/>
            <person name="Aston K.I."/>
            <person name="Baarends W.M."/>
            <person name="Tuettelmann F."/>
        </authorList>
    </citation>
    <scope>VARIANT 515-ARG--ILE-556 DEL</scope>
</reference>
<evidence type="ECO:0000250" key="1"/>
<evidence type="ECO:0000250" key="2">
    <source>
        <dbReference type="UniProtKB" id="A2AU37"/>
    </source>
</evidence>
<evidence type="ECO:0000269" key="3">
    <source>
    </source>
</evidence>
<evidence type="ECO:0000269" key="4">
    <source>
    </source>
</evidence>
<evidence type="ECO:0000305" key="5"/>
<name>RD21L_HUMAN</name>
<organism>
    <name type="scientific">Homo sapiens</name>
    <name type="common">Human</name>
    <dbReference type="NCBI Taxonomy" id="9606"/>
    <lineage>
        <taxon>Eukaryota</taxon>
        <taxon>Metazoa</taxon>
        <taxon>Chordata</taxon>
        <taxon>Craniata</taxon>
        <taxon>Vertebrata</taxon>
        <taxon>Euteleostomi</taxon>
        <taxon>Mammalia</taxon>
        <taxon>Eutheria</taxon>
        <taxon>Euarchontoglires</taxon>
        <taxon>Primates</taxon>
        <taxon>Haplorrhini</taxon>
        <taxon>Catarrhini</taxon>
        <taxon>Hominidae</taxon>
        <taxon>Homo</taxon>
    </lineage>
</organism>
<protein>
    <recommendedName>
        <fullName>Double-strand-break repair protein rad21-like protein 1</fullName>
    </recommendedName>
</protein>
<comment type="function">
    <text evidence="1">Meiosis-specific component of some cohesin complex required during the initial steps of prophase I in male meiosis. Probably required during early meiosis in males for separation of sister chromatids and homologous chromosomes. Replaces RAD21 in premeiotic S phase (during early stages of prophase I), while RAD21 reappears in later stages of prophase I. Involved in synaptonemal complex assembly, synapsis initiation and crossover recombination between homologous chromosomes during prophase I (By similarity).</text>
</comment>
<comment type="subunit">
    <text evidence="1">Component of some meiotic cohesin complex composed of the SMC1 (SMC1A or SMC1B) and SMC3 heterodimer attached via their hinge domain, RAD21L which link them, and STAG3.</text>
</comment>
<comment type="subcellular location">
    <subcellularLocation>
        <location evidence="2">Nucleus</location>
    </subcellularLocation>
    <subcellularLocation>
        <location evidence="2">Chromosome</location>
    </subcellularLocation>
    <text evidence="2">In meiotic chromosomes, localized along axial elements in early meiosis: detectable on the axial elements in leptotene, and stays on the axial/lateral elements until mid pachytene. It then disappears and is replaced with RAD21. Compared to REC8, has mutually exclusive loading sites on the chromosomes: REC8 and RAD21L form distinct cohesin-enriched domains along the axial elements.</text>
</comment>
<comment type="alternative products">
    <event type="alternative splicing"/>
    <isoform>
        <id>Q9H4I0-1</id>
        <name>1</name>
        <sequence type="displayed"/>
    </isoform>
    <isoform>
        <id>Q9H4I0-2</id>
        <name>2</name>
        <sequence type="described" ref="VSP_038157 VSP_038158"/>
    </isoform>
</comment>
<comment type="similarity">
    <text evidence="5">Belongs to the rad21 family.</text>
</comment>
<sequence>MFYTHVLMSKRGPLAKIWLAAHWEKKLTKAHVFECNLEITIEKILSPKVKIALRTSGHLLLGVVRIYNRKAKYLLADCSEAFLKMKMTFCPGLVDLPKENFEASYNAITLPEEFHDFDTQNMNAIDVSEHFTQNQSRPEEITLRENFDNDLIFQAESFGEESEILRRHSFFDDNILLNSSGPLIEHSSGSLTGERSLFYDSGDGFGDEGAAGEMIDNLLQDDQNILLEDMHLNREISLPSEPPNSLAVEPDNSECICVPENEKMNETILLSTEEEGFTLDPIDISDIAEKRKGKKRRLLIDPIKELSSKVIHKQLTSFADTLMVLELAPPTQRLMMWKKRGGVHTLLSTAAQDLIHAELKMLFTKCFLSSGFKLGRKMIQKESVREEVGNQNIVETSMMQEPNYQQELSKPQTWKDVIGGSQHSSHEDTNKNINSEQDIVEMVSLAAEESSLMNDLFAQEIEYSPVELESLSNEENIETERWNGRILQMLNRLRESNKMGMQSFSLMKLCRNSDRKQAAAKFYSFLVLKKQLAIELSQSAPYADIIATMGPMFYNI</sequence>
<gene>
    <name type="primary">RAD21L1</name>
    <name type="synonym">RAD21L</name>
</gene>